<protein>
    <recommendedName>
        <fullName evidence="1">Ribosomal RNA large subunit methyltransferase F</fullName>
        <ecNumber evidence="1">2.1.1.181</ecNumber>
    </recommendedName>
    <alternativeName>
        <fullName evidence="1">23S rRNA mA1618 methyltransferase</fullName>
    </alternativeName>
    <alternativeName>
        <fullName evidence="1">rRNA adenine N-6-methyltransferase</fullName>
    </alternativeName>
</protein>
<accession>A4W8E5</accession>
<gene>
    <name evidence="1" type="primary">rlmF</name>
    <name type="ordered locus">Ent638_1294</name>
</gene>
<organism>
    <name type="scientific">Enterobacter sp. (strain 638)</name>
    <dbReference type="NCBI Taxonomy" id="399742"/>
    <lineage>
        <taxon>Bacteria</taxon>
        <taxon>Pseudomonadati</taxon>
        <taxon>Pseudomonadota</taxon>
        <taxon>Gammaproteobacteria</taxon>
        <taxon>Enterobacterales</taxon>
        <taxon>Enterobacteriaceae</taxon>
        <taxon>Enterobacter</taxon>
    </lineage>
</organism>
<comment type="function">
    <text evidence="1">Specifically methylates the adenine in position 1618 of 23S rRNA.</text>
</comment>
<comment type="catalytic activity">
    <reaction evidence="1">
        <text>adenosine(1618) in 23S rRNA + S-adenosyl-L-methionine = N(6)-methyladenosine(1618) in 23S rRNA + S-adenosyl-L-homocysteine + H(+)</text>
        <dbReference type="Rhea" id="RHEA:16497"/>
        <dbReference type="Rhea" id="RHEA-COMP:10229"/>
        <dbReference type="Rhea" id="RHEA-COMP:10231"/>
        <dbReference type="ChEBI" id="CHEBI:15378"/>
        <dbReference type="ChEBI" id="CHEBI:57856"/>
        <dbReference type="ChEBI" id="CHEBI:59789"/>
        <dbReference type="ChEBI" id="CHEBI:74411"/>
        <dbReference type="ChEBI" id="CHEBI:74449"/>
        <dbReference type="EC" id="2.1.1.181"/>
    </reaction>
</comment>
<comment type="subcellular location">
    <subcellularLocation>
        <location evidence="1">Cytoplasm</location>
    </subcellularLocation>
</comment>
<comment type="similarity">
    <text evidence="1">Belongs to the methyltransferase superfamily. METTL16/RlmF family.</text>
</comment>
<sequence length="305" mass="33701">MTAEKPGLHPRNRHRSRYDMNALCQSCPQLQAFIVQTPAGEPSVNFADPLAVKALNKALLAHFYGVTQWDIPEGFLCPPVPGRADYVHHLADLLAEDNAGTIPPQATVLDIGTGANLIYPLIGVAEYGWRFTGSETGKDAYASAQAIVNGNEGLTRAIRLRRQKEASDIFNGIIHKNESYDATMCNPPFHDSAETARAGSERKRRNLGQAEDGALNFGGQQHELWCEGGEVAFIEKMIAESKLFARQVKWFTTLVSRGDNLPPLYRALTAVGAVKVVKKEMAQGQKQSRFIAWTFMDDAKRRKSF</sequence>
<feature type="chain" id="PRO_0000349904" description="Ribosomal RNA large subunit methyltransferase F">
    <location>
        <begin position="1"/>
        <end position="305"/>
    </location>
</feature>
<reference key="1">
    <citation type="journal article" date="2010" name="PLoS Genet.">
        <title>Genome sequence of the plant growth promoting endophytic bacterium Enterobacter sp. 638.</title>
        <authorList>
            <person name="Taghavi S."/>
            <person name="van der Lelie D."/>
            <person name="Hoffman A."/>
            <person name="Zhang Y.B."/>
            <person name="Walla M.D."/>
            <person name="Vangronsveld J."/>
            <person name="Newman L."/>
            <person name="Monchy S."/>
        </authorList>
    </citation>
    <scope>NUCLEOTIDE SEQUENCE [LARGE SCALE GENOMIC DNA]</scope>
    <source>
        <strain>638</strain>
    </source>
</reference>
<dbReference type="EC" id="2.1.1.181" evidence="1"/>
<dbReference type="EMBL" id="CP000653">
    <property type="protein sequence ID" value="ABP59975.1"/>
    <property type="molecule type" value="Genomic_DNA"/>
</dbReference>
<dbReference type="RefSeq" id="WP_012016694.1">
    <property type="nucleotide sequence ID" value="NC_009436.1"/>
</dbReference>
<dbReference type="SMR" id="A4W8E5"/>
<dbReference type="STRING" id="399742.Ent638_1294"/>
<dbReference type="KEGG" id="ent:Ent638_1294"/>
<dbReference type="eggNOG" id="COG3129">
    <property type="taxonomic scope" value="Bacteria"/>
</dbReference>
<dbReference type="HOGENOM" id="CLU_027534_3_0_6"/>
<dbReference type="OrthoDB" id="1115728at2"/>
<dbReference type="Proteomes" id="UP000000230">
    <property type="component" value="Chromosome"/>
</dbReference>
<dbReference type="GO" id="GO:0005737">
    <property type="term" value="C:cytoplasm"/>
    <property type="evidence" value="ECO:0007669"/>
    <property type="project" value="UniProtKB-SubCell"/>
</dbReference>
<dbReference type="GO" id="GO:0052907">
    <property type="term" value="F:23S rRNA (adenine(1618)-N(6))-methyltransferase activity"/>
    <property type="evidence" value="ECO:0007669"/>
    <property type="project" value="UniProtKB-EC"/>
</dbReference>
<dbReference type="GO" id="GO:0070475">
    <property type="term" value="P:rRNA base methylation"/>
    <property type="evidence" value="ECO:0007669"/>
    <property type="project" value="TreeGrafter"/>
</dbReference>
<dbReference type="CDD" id="cd02440">
    <property type="entry name" value="AdoMet_MTases"/>
    <property type="match status" value="1"/>
</dbReference>
<dbReference type="FunFam" id="3.40.50.150:FF:000045">
    <property type="entry name" value="Ribosomal RNA large subunit methyltransferase F"/>
    <property type="match status" value="1"/>
</dbReference>
<dbReference type="Gene3D" id="3.40.50.150">
    <property type="entry name" value="Vaccinia Virus protein VP39"/>
    <property type="match status" value="1"/>
</dbReference>
<dbReference type="HAMAP" id="MF_01848">
    <property type="entry name" value="23SrRNA_methyltr_F"/>
    <property type="match status" value="1"/>
</dbReference>
<dbReference type="InterPro" id="IPR010286">
    <property type="entry name" value="METTL16/RlmF"/>
</dbReference>
<dbReference type="InterPro" id="IPR016909">
    <property type="entry name" value="rRNA_lsu_MeTfrase_F"/>
</dbReference>
<dbReference type="InterPro" id="IPR029063">
    <property type="entry name" value="SAM-dependent_MTases_sf"/>
</dbReference>
<dbReference type="NCBIfam" id="NF008725">
    <property type="entry name" value="PRK11727.1"/>
    <property type="match status" value="1"/>
</dbReference>
<dbReference type="PANTHER" id="PTHR13393:SF0">
    <property type="entry name" value="RNA N6-ADENOSINE-METHYLTRANSFERASE METTL16"/>
    <property type="match status" value="1"/>
</dbReference>
<dbReference type="PANTHER" id="PTHR13393">
    <property type="entry name" value="SAM-DEPENDENT METHYLTRANSFERASE"/>
    <property type="match status" value="1"/>
</dbReference>
<dbReference type="Pfam" id="PF05971">
    <property type="entry name" value="Methyltransf_10"/>
    <property type="match status" value="1"/>
</dbReference>
<dbReference type="PIRSF" id="PIRSF029038">
    <property type="entry name" value="Mtase_YbiN_prd"/>
    <property type="match status" value="1"/>
</dbReference>
<dbReference type="SUPFAM" id="SSF53335">
    <property type="entry name" value="S-adenosyl-L-methionine-dependent methyltransferases"/>
    <property type="match status" value="1"/>
</dbReference>
<evidence type="ECO:0000255" key="1">
    <source>
        <dbReference type="HAMAP-Rule" id="MF_01848"/>
    </source>
</evidence>
<proteinExistence type="inferred from homology"/>
<name>RLMF_ENT38</name>
<keyword id="KW-0963">Cytoplasm</keyword>
<keyword id="KW-0489">Methyltransferase</keyword>
<keyword id="KW-0698">rRNA processing</keyword>
<keyword id="KW-0949">S-adenosyl-L-methionine</keyword>
<keyword id="KW-0808">Transferase</keyword>